<evidence type="ECO:0000255" key="1">
    <source>
        <dbReference type="HAMAP-Rule" id="MF_00218"/>
    </source>
</evidence>
<organism>
    <name type="scientific">Mesorhizobium japonicum (strain LMG 29417 / CECT 9101 / MAFF 303099)</name>
    <name type="common">Mesorhizobium loti (strain MAFF 303099)</name>
    <dbReference type="NCBI Taxonomy" id="266835"/>
    <lineage>
        <taxon>Bacteria</taxon>
        <taxon>Pseudomonadati</taxon>
        <taxon>Pseudomonadota</taxon>
        <taxon>Alphaproteobacteria</taxon>
        <taxon>Hyphomicrobiales</taxon>
        <taxon>Phyllobacteriaceae</taxon>
        <taxon>Mesorhizobium</taxon>
    </lineage>
</organism>
<protein>
    <recommendedName>
        <fullName evidence="1">Uroporphyrinogen decarboxylase</fullName>
        <shortName evidence="1">UPD</shortName>
        <shortName evidence="1">URO-D</shortName>
        <ecNumber evidence="1">4.1.1.37</ecNumber>
    </recommendedName>
</protein>
<comment type="function">
    <text evidence="1">Catalyzes the decarboxylation of four acetate groups of uroporphyrinogen-III to yield coproporphyrinogen-III.</text>
</comment>
<comment type="catalytic activity">
    <reaction evidence="1">
        <text>uroporphyrinogen III + 4 H(+) = coproporphyrinogen III + 4 CO2</text>
        <dbReference type="Rhea" id="RHEA:19865"/>
        <dbReference type="ChEBI" id="CHEBI:15378"/>
        <dbReference type="ChEBI" id="CHEBI:16526"/>
        <dbReference type="ChEBI" id="CHEBI:57308"/>
        <dbReference type="ChEBI" id="CHEBI:57309"/>
        <dbReference type="EC" id="4.1.1.37"/>
    </reaction>
</comment>
<comment type="pathway">
    <text evidence="1">Porphyrin-containing compound metabolism; protoporphyrin-IX biosynthesis; coproporphyrinogen-III from 5-aminolevulinate: step 4/4.</text>
</comment>
<comment type="subunit">
    <text evidence="1">Homodimer.</text>
</comment>
<comment type="subcellular location">
    <subcellularLocation>
        <location evidence="1">Cytoplasm</location>
    </subcellularLocation>
</comment>
<comment type="similarity">
    <text evidence="1">Belongs to the uroporphyrinogen decarboxylase family.</text>
</comment>
<reference key="1">
    <citation type="journal article" date="2000" name="DNA Res.">
        <title>Complete genome structure of the nitrogen-fixing symbiotic bacterium Mesorhizobium loti.</title>
        <authorList>
            <person name="Kaneko T."/>
            <person name="Nakamura Y."/>
            <person name="Sato S."/>
            <person name="Asamizu E."/>
            <person name="Kato T."/>
            <person name="Sasamoto S."/>
            <person name="Watanabe A."/>
            <person name="Idesawa K."/>
            <person name="Ishikawa A."/>
            <person name="Kawashima K."/>
            <person name="Kimura T."/>
            <person name="Kishida Y."/>
            <person name="Kiyokawa C."/>
            <person name="Kohara M."/>
            <person name="Matsumoto M."/>
            <person name="Matsuno A."/>
            <person name="Mochizuki Y."/>
            <person name="Nakayama S."/>
            <person name="Nakazaki N."/>
            <person name="Shimpo S."/>
            <person name="Sugimoto M."/>
            <person name="Takeuchi C."/>
            <person name="Yamada M."/>
            <person name="Tabata S."/>
        </authorList>
    </citation>
    <scope>NUCLEOTIDE SEQUENCE [LARGE SCALE GENOMIC DNA]</scope>
    <source>
        <strain>LMG 29417 / CECT 9101 / MAFF 303099</strain>
    </source>
</reference>
<name>DCUP_RHILO</name>
<feature type="chain" id="PRO_0000187630" description="Uroporphyrinogen decarboxylase">
    <location>
        <begin position="1"/>
        <end position="343"/>
    </location>
</feature>
<feature type="binding site" evidence="1">
    <location>
        <begin position="25"/>
        <end position="29"/>
    </location>
    <ligand>
        <name>substrate</name>
    </ligand>
</feature>
<feature type="binding site" evidence="1">
    <location>
        <position position="44"/>
    </location>
    <ligand>
        <name>substrate</name>
    </ligand>
</feature>
<feature type="binding site" evidence="1">
    <location>
        <position position="75"/>
    </location>
    <ligand>
        <name>substrate</name>
    </ligand>
</feature>
<feature type="binding site" evidence="1">
    <location>
        <position position="150"/>
    </location>
    <ligand>
        <name>substrate</name>
    </ligand>
</feature>
<feature type="binding site" evidence="1">
    <location>
        <position position="205"/>
    </location>
    <ligand>
        <name>substrate</name>
    </ligand>
</feature>
<feature type="binding site" evidence="1">
    <location>
        <position position="320"/>
    </location>
    <ligand>
        <name>substrate</name>
    </ligand>
</feature>
<feature type="site" description="Transition state stabilizer" evidence="1">
    <location>
        <position position="75"/>
    </location>
</feature>
<gene>
    <name evidence="1" type="primary">hemE</name>
    <name type="ordered locus">mll4487</name>
</gene>
<keyword id="KW-0963">Cytoplasm</keyword>
<keyword id="KW-0210">Decarboxylase</keyword>
<keyword id="KW-0456">Lyase</keyword>
<keyword id="KW-0627">Porphyrin biosynthesis</keyword>
<sequence length="343" mass="37668">MPKSRIMLDVLKGEAHFPPPLWMMRQAGRYLPEYRETRRRAGSFLDLCYDPDLAVEVTLQPIERFGFDASILFSDILVVPHALGRDVRFEEGRGPLLTPISVAEIMALESDVFHVNLEPVYETVRRLRAKLPDETTLIGFCGAPWTVATYMIAGHGTPDQAPARLFAYREPAAFQHLLKVLADHSAAYLIRQIEAGADVVQIFDSWSGVLDDASFDQFCVWPVAEIVRQVQAVHPDVPIIGFPKGAGARYRTYRQKTGVTGLGIDWTVPLAAAKDLQRSGAVQGNLDPLRLVAGGKALSDGVEAILKALGDGPLIFNLGHGITPETPIAHVEAMVKQVRSAAR</sequence>
<dbReference type="EC" id="4.1.1.37" evidence="1"/>
<dbReference type="EMBL" id="BA000012">
    <property type="protein sequence ID" value="BAB51134.1"/>
    <property type="molecule type" value="Genomic_DNA"/>
</dbReference>
<dbReference type="RefSeq" id="WP_010912476.1">
    <property type="nucleotide sequence ID" value="NC_002678.2"/>
</dbReference>
<dbReference type="SMR" id="Q98DY6"/>
<dbReference type="KEGG" id="mlo:mll4487"/>
<dbReference type="PATRIC" id="fig|266835.9.peg.3547"/>
<dbReference type="eggNOG" id="COG0407">
    <property type="taxonomic scope" value="Bacteria"/>
</dbReference>
<dbReference type="HOGENOM" id="CLU_040933_0_0_5"/>
<dbReference type="UniPathway" id="UPA00251">
    <property type="reaction ID" value="UER00321"/>
</dbReference>
<dbReference type="Proteomes" id="UP000000552">
    <property type="component" value="Chromosome"/>
</dbReference>
<dbReference type="GO" id="GO:0005829">
    <property type="term" value="C:cytosol"/>
    <property type="evidence" value="ECO:0007669"/>
    <property type="project" value="TreeGrafter"/>
</dbReference>
<dbReference type="GO" id="GO:0004853">
    <property type="term" value="F:uroporphyrinogen decarboxylase activity"/>
    <property type="evidence" value="ECO:0007669"/>
    <property type="project" value="UniProtKB-UniRule"/>
</dbReference>
<dbReference type="GO" id="GO:0019353">
    <property type="term" value="P:protoporphyrinogen IX biosynthetic process from glutamate"/>
    <property type="evidence" value="ECO:0007669"/>
    <property type="project" value="TreeGrafter"/>
</dbReference>
<dbReference type="CDD" id="cd00717">
    <property type="entry name" value="URO-D"/>
    <property type="match status" value="1"/>
</dbReference>
<dbReference type="FunFam" id="3.20.20.210:FF:000007">
    <property type="entry name" value="Uroporphyrinogen decarboxylase"/>
    <property type="match status" value="1"/>
</dbReference>
<dbReference type="Gene3D" id="3.20.20.210">
    <property type="match status" value="1"/>
</dbReference>
<dbReference type="HAMAP" id="MF_00218">
    <property type="entry name" value="URO_D"/>
    <property type="match status" value="1"/>
</dbReference>
<dbReference type="InterPro" id="IPR038071">
    <property type="entry name" value="UROD/MetE-like_sf"/>
</dbReference>
<dbReference type="InterPro" id="IPR006361">
    <property type="entry name" value="Uroporphyrinogen_deCO2ase_HemE"/>
</dbReference>
<dbReference type="InterPro" id="IPR000257">
    <property type="entry name" value="Uroporphyrinogen_deCOase"/>
</dbReference>
<dbReference type="NCBIfam" id="TIGR01464">
    <property type="entry name" value="hemE"/>
    <property type="match status" value="1"/>
</dbReference>
<dbReference type="PANTHER" id="PTHR21091">
    <property type="entry name" value="METHYLTETRAHYDROFOLATE:HOMOCYSTEINE METHYLTRANSFERASE RELATED"/>
    <property type="match status" value="1"/>
</dbReference>
<dbReference type="PANTHER" id="PTHR21091:SF169">
    <property type="entry name" value="UROPORPHYRINOGEN DECARBOXYLASE"/>
    <property type="match status" value="1"/>
</dbReference>
<dbReference type="Pfam" id="PF01208">
    <property type="entry name" value="URO-D"/>
    <property type="match status" value="1"/>
</dbReference>
<dbReference type="SUPFAM" id="SSF51726">
    <property type="entry name" value="UROD/MetE-like"/>
    <property type="match status" value="1"/>
</dbReference>
<dbReference type="PROSITE" id="PS00906">
    <property type="entry name" value="UROD_1"/>
    <property type="match status" value="1"/>
</dbReference>
<dbReference type="PROSITE" id="PS00907">
    <property type="entry name" value="UROD_2"/>
    <property type="match status" value="1"/>
</dbReference>
<proteinExistence type="inferred from homology"/>
<accession>Q98DY6</accession>